<organism>
    <name type="scientific">Treponema pallidum subsp. pallidum (strain SS14)</name>
    <dbReference type="NCBI Taxonomy" id="455434"/>
    <lineage>
        <taxon>Bacteria</taxon>
        <taxon>Pseudomonadati</taxon>
        <taxon>Spirochaetota</taxon>
        <taxon>Spirochaetia</taxon>
        <taxon>Spirochaetales</taxon>
        <taxon>Treponemataceae</taxon>
        <taxon>Treponema</taxon>
    </lineage>
</organism>
<name>MIAB_TREPS</name>
<proteinExistence type="inferred from homology"/>
<reference key="1">
    <citation type="journal article" date="2008" name="BMC Microbiol.">
        <title>Complete genome sequence of Treponema pallidum ssp. pallidum strain SS14 determined with oligonucleotide arrays.</title>
        <authorList>
            <person name="Matejkova P."/>
            <person name="Strouhal M."/>
            <person name="Smajs D."/>
            <person name="Norris S.J."/>
            <person name="Palzkill T."/>
            <person name="Petrosino J.F."/>
            <person name="Sodergren E."/>
            <person name="Norton J.E."/>
            <person name="Singh J."/>
            <person name="Richmond T.A."/>
            <person name="Molla M.N."/>
            <person name="Albert T.J."/>
            <person name="Weinstock G.M."/>
        </authorList>
    </citation>
    <scope>NUCLEOTIDE SEQUENCE [LARGE SCALE GENOMIC DNA]</scope>
    <source>
        <strain>SS14</strain>
    </source>
</reference>
<gene>
    <name evidence="1" type="primary">miaB</name>
    <name type="ordered locus">TPASS_0754</name>
</gene>
<feature type="chain" id="PRO_0000374622" description="tRNA-2-methylthio-N(6)-dimethylallyladenosine synthase">
    <location>
        <begin position="1"/>
        <end position="456"/>
    </location>
</feature>
<feature type="domain" description="MTTase N-terminal" evidence="1">
    <location>
        <begin position="1"/>
        <end position="116"/>
    </location>
</feature>
<feature type="domain" description="Radical SAM core" evidence="2">
    <location>
        <begin position="148"/>
        <end position="384"/>
    </location>
</feature>
<feature type="domain" description="TRAM" evidence="1">
    <location>
        <begin position="387"/>
        <end position="452"/>
    </location>
</feature>
<feature type="binding site" evidence="1">
    <location>
        <position position="10"/>
    </location>
    <ligand>
        <name>[4Fe-4S] cluster</name>
        <dbReference type="ChEBI" id="CHEBI:49883"/>
        <label>1</label>
    </ligand>
</feature>
<feature type="binding site" evidence="1">
    <location>
        <position position="46"/>
    </location>
    <ligand>
        <name>[4Fe-4S] cluster</name>
        <dbReference type="ChEBI" id="CHEBI:49883"/>
        <label>1</label>
    </ligand>
</feature>
<feature type="binding site" evidence="1">
    <location>
        <position position="79"/>
    </location>
    <ligand>
        <name>[4Fe-4S] cluster</name>
        <dbReference type="ChEBI" id="CHEBI:49883"/>
        <label>1</label>
    </ligand>
</feature>
<feature type="binding site" evidence="1">
    <location>
        <position position="162"/>
    </location>
    <ligand>
        <name>[4Fe-4S] cluster</name>
        <dbReference type="ChEBI" id="CHEBI:49883"/>
        <label>2</label>
        <note>4Fe-4S-S-AdoMet</note>
    </ligand>
</feature>
<feature type="binding site" evidence="1">
    <location>
        <position position="166"/>
    </location>
    <ligand>
        <name>[4Fe-4S] cluster</name>
        <dbReference type="ChEBI" id="CHEBI:49883"/>
        <label>2</label>
        <note>4Fe-4S-S-AdoMet</note>
    </ligand>
</feature>
<feature type="binding site" evidence="1">
    <location>
        <position position="169"/>
    </location>
    <ligand>
        <name>[4Fe-4S] cluster</name>
        <dbReference type="ChEBI" id="CHEBI:49883"/>
        <label>2</label>
        <note>4Fe-4S-S-AdoMet</note>
    </ligand>
</feature>
<comment type="function">
    <text evidence="1">Catalyzes the methylthiolation of N6-(dimethylallyl)adenosine (i(6)A), leading to the formation of 2-methylthio-N6-(dimethylallyl)adenosine (ms(2)i(6)A) at position 37 in tRNAs that read codons beginning with uridine.</text>
</comment>
<comment type="catalytic activity">
    <reaction evidence="1">
        <text>N(6)-dimethylallyladenosine(37) in tRNA + (sulfur carrier)-SH + AH2 + 2 S-adenosyl-L-methionine = 2-methylsulfanyl-N(6)-dimethylallyladenosine(37) in tRNA + (sulfur carrier)-H + 5'-deoxyadenosine + L-methionine + A + S-adenosyl-L-homocysteine + 2 H(+)</text>
        <dbReference type="Rhea" id="RHEA:37067"/>
        <dbReference type="Rhea" id="RHEA-COMP:10375"/>
        <dbReference type="Rhea" id="RHEA-COMP:10376"/>
        <dbReference type="Rhea" id="RHEA-COMP:14737"/>
        <dbReference type="Rhea" id="RHEA-COMP:14739"/>
        <dbReference type="ChEBI" id="CHEBI:13193"/>
        <dbReference type="ChEBI" id="CHEBI:15378"/>
        <dbReference type="ChEBI" id="CHEBI:17319"/>
        <dbReference type="ChEBI" id="CHEBI:17499"/>
        <dbReference type="ChEBI" id="CHEBI:29917"/>
        <dbReference type="ChEBI" id="CHEBI:57844"/>
        <dbReference type="ChEBI" id="CHEBI:57856"/>
        <dbReference type="ChEBI" id="CHEBI:59789"/>
        <dbReference type="ChEBI" id="CHEBI:64428"/>
        <dbReference type="ChEBI" id="CHEBI:74415"/>
        <dbReference type="ChEBI" id="CHEBI:74417"/>
        <dbReference type="EC" id="2.8.4.3"/>
    </reaction>
</comment>
<comment type="cofactor">
    <cofactor evidence="1">
        <name>[4Fe-4S] cluster</name>
        <dbReference type="ChEBI" id="CHEBI:49883"/>
    </cofactor>
    <text evidence="1">Binds 2 [4Fe-4S] clusters. One cluster is coordinated with 3 cysteines and an exchangeable S-adenosyl-L-methionine.</text>
</comment>
<comment type="subunit">
    <text evidence="1">Monomer.</text>
</comment>
<comment type="subcellular location">
    <subcellularLocation>
        <location evidence="1">Cytoplasm</location>
    </subcellularLocation>
</comment>
<comment type="similarity">
    <text evidence="1">Belongs to the methylthiotransferase family. MiaB subfamily.</text>
</comment>
<evidence type="ECO:0000255" key="1">
    <source>
        <dbReference type="HAMAP-Rule" id="MF_01864"/>
    </source>
</evidence>
<evidence type="ECO:0000255" key="2">
    <source>
        <dbReference type="PROSITE-ProRule" id="PRU01266"/>
    </source>
</evidence>
<sequence>MTYFFETYGCQMNVAESASVEQLLLARGWTKAVDAQTCDVLIINTCSVRITAETRVFGRLGLFSSLKKKRAFFIILMGCMAQRLHDKIQQQFPRIDYVVGTFAHARFESIFQEIEQKLTQKDYRFEFISERYREHPVSGYRFFASSYSEGSFQSFIPIMNGCNNFCSFCIVPYVRGREISRDLDAILQEVDVLSEKGVREITLLGQNVNSYRGRDREGNIVTFPQLLRHLVRRCEVKDQIKWIRFVSSHPKDLSDDLIATIAQESRLCRLVHLPVQHGANGVLKRMRRSYTREQYLSLVGKLKASVPNVALSTDILIGFPGETEEDFEQTLDLMREVEFDSAFMYHYNPREGTPAYDFPDRIPDATRIARLQRVIALQMSTTLKKMRARVGKTLPVLVESRSRNNPEELFGHTELGEMTVLEGKVDPTYIGRFVDVQVKEVRGRTLRAHLVQERAK</sequence>
<keyword id="KW-0004">4Fe-4S</keyword>
<keyword id="KW-0963">Cytoplasm</keyword>
<keyword id="KW-0408">Iron</keyword>
<keyword id="KW-0411">Iron-sulfur</keyword>
<keyword id="KW-0479">Metal-binding</keyword>
<keyword id="KW-0949">S-adenosyl-L-methionine</keyword>
<keyword id="KW-0808">Transferase</keyword>
<keyword id="KW-0819">tRNA processing</keyword>
<dbReference type="EC" id="2.8.4.3" evidence="1"/>
<dbReference type="EMBL" id="CP000805">
    <property type="protein sequence ID" value="ACD71172.1"/>
    <property type="molecule type" value="Genomic_DNA"/>
</dbReference>
<dbReference type="RefSeq" id="WP_010882199.1">
    <property type="nucleotide sequence ID" value="NC_021508.1"/>
</dbReference>
<dbReference type="SMR" id="B2S3Z3"/>
<dbReference type="GeneID" id="93876521"/>
<dbReference type="KEGG" id="tpp:TPASS_0754"/>
<dbReference type="PATRIC" id="fig|455434.6.peg.743"/>
<dbReference type="Proteomes" id="UP000001202">
    <property type="component" value="Chromosome"/>
</dbReference>
<dbReference type="GO" id="GO:0005829">
    <property type="term" value="C:cytosol"/>
    <property type="evidence" value="ECO:0007669"/>
    <property type="project" value="TreeGrafter"/>
</dbReference>
<dbReference type="GO" id="GO:0051539">
    <property type="term" value="F:4 iron, 4 sulfur cluster binding"/>
    <property type="evidence" value="ECO:0007669"/>
    <property type="project" value="UniProtKB-UniRule"/>
</dbReference>
<dbReference type="GO" id="GO:0046872">
    <property type="term" value="F:metal ion binding"/>
    <property type="evidence" value="ECO:0007669"/>
    <property type="project" value="UniProtKB-KW"/>
</dbReference>
<dbReference type="GO" id="GO:0035597">
    <property type="term" value="F:N6-isopentenyladenosine methylthiotransferase activity"/>
    <property type="evidence" value="ECO:0007669"/>
    <property type="project" value="TreeGrafter"/>
</dbReference>
<dbReference type="CDD" id="cd01335">
    <property type="entry name" value="Radical_SAM"/>
    <property type="match status" value="1"/>
</dbReference>
<dbReference type="FunFam" id="3.40.50.12160:FF:000003">
    <property type="entry name" value="CDK5 regulatory subunit-associated protein 1"/>
    <property type="match status" value="1"/>
</dbReference>
<dbReference type="FunFam" id="3.80.30.20:FF:000001">
    <property type="entry name" value="tRNA-2-methylthio-N(6)-dimethylallyladenosine synthase 2"/>
    <property type="match status" value="1"/>
</dbReference>
<dbReference type="Gene3D" id="3.40.50.12160">
    <property type="entry name" value="Methylthiotransferase, N-terminal domain"/>
    <property type="match status" value="1"/>
</dbReference>
<dbReference type="Gene3D" id="3.80.30.20">
    <property type="entry name" value="tm_1862 like domain"/>
    <property type="match status" value="1"/>
</dbReference>
<dbReference type="HAMAP" id="MF_01864">
    <property type="entry name" value="tRNA_metthiotr_MiaB"/>
    <property type="match status" value="1"/>
</dbReference>
<dbReference type="InterPro" id="IPR006638">
    <property type="entry name" value="Elp3/MiaA/NifB-like_rSAM"/>
</dbReference>
<dbReference type="InterPro" id="IPR005839">
    <property type="entry name" value="Methylthiotransferase"/>
</dbReference>
<dbReference type="InterPro" id="IPR020612">
    <property type="entry name" value="Methylthiotransferase_CS"/>
</dbReference>
<dbReference type="InterPro" id="IPR013848">
    <property type="entry name" value="Methylthiotransferase_N"/>
</dbReference>
<dbReference type="InterPro" id="IPR038135">
    <property type="entry name" value="Methylthiotransferase_N_sf"/>
</dbReference>
<dbReference type="InterPro" id="IPR006463">
    <property type="entry name" value="MiaB_methiolase"/>
</dbReference>
<dbReference type="InterPro" id="IPR007197">
    <property type="entry name" value="rSAM"/>
</dbReference>
<dbReference type="InterPro" id="IPR023404">
    <property type="entry name" value="rSAM_horseshoe"/>
</dbReference>
<dbReference type="InterPro" id="IPR002792">
    <property type="entry name" value="TRAM_dom"/>
</dbReference>
<dbReference type="NCBIfam" id="TIGR01574">
    <property type="entry name" value="miaB-methiolase"/>
    <property type="match status" value="1"/>
</dbReference>
<dbReference type="NCBIfam" id="TIGR00089">
    <property type="entry name" value="MiaB/RimO family radical SAM methylthiotransferase"/>
    <property type="match status" value="1"/>
</dbReference>
<dbReference type="PANTHER" id="PTHR43020">
    <property type="entry name" value="CDK5 REGULATORY SUBUNIT-ASSOCIATED PROTEIN 1"/>
    <property type="match status" value="1"/>
</dbReference>
<dbReference type="PANTHER" id="PTHR43020:SF2">
    <property type="entry name" value="MITOCHONDRIAL TRNA METHYLTHIOTRANSFERASE CDK5RAP1"/>
    <property type="match status" value="1"/>
</dbReference>
<dbReference type="Pfam" id="PF04055">
    <property type="entry name" value="Radical_SAM"/>
    <property type="match status" value="1"/>
</dbReference>
<dbReference type="Pfam" id="PF01938">
    <property type="entry name" value="TRAM"/>
    <property type="match status" value="1"/>
</dbReference>
<dbReference type="Pfam" id="PF00919">
    <property type="entry name" value="UPF0004"/>
    <property type="match status" value="1"/>
</dbReference>
<dbReference type="SFLD" id="SFLDF00273">
    <property type="entry name" value="(dimethylallyl)adenosine_tRNA"/>
    <property type="match status" value="1"/>
</dbReference>
<dbReference type="SFLD" id="SFLDG01082">
    <property type="entry name" value="B12-binding_domain_containing"/>
    <property type="match status" value="1"/>
</dbReference>
<dbReference type="SFLD" id="SFLDG01061">
    <property type="entry name" value="methylthiotransferase"/>
    <property type="match status" value="1"/>
</dbReference>
<dbReference type="SMART" id="SM00729">
    <property type="entry name" value="Elp3"/>
    <property type="match status" value="1"/>
</dbReference>
<dbReference type="SUPFAM" id="SSF102114">
    <property type="entry name" value="Radical SAM enzymes"/>
    <property type="match status" value="1"/>
</dbReference>
<dbReference type="PROSITE" id="PS51449">
    <property type="entry name" value="MTTASE_N"/>
    <property type="match status" value="1"/>
</dbReference>
<dbReference type="PROSITE" id="PS01278">
    <property type="entry name" value="MTTASE_RADICAL"/>
    <property type="match status" value="1"/>
</dbReference>
<dbReference type="PROSITE" id="PS51918">
    <property type="entry name" value="RADICAL_SAM"/>
    <property type="match status" value="1"/>
</dbReference>
<dbReference type="PROSITE" id="PS50926">
    <property type="entry name" value="TRAM"/>
    <property type="match status" value="1"/>
</dbReference>
<protein>
    <recommendedName>
        <fullName evidence="1">tRNA-2-methylthio-N(6)-dimethylallyladenosine synthase</fullName>
        <ecNumber evidence="1">2.8.4.3</ecNumber>
    </recommendedName>
    <alternativeName>
        <fullName evidence="1">(Dimethylallyl)adenosine tRNA methylthiotransferase MiaB</fullName>
    </alternativeName>
    <alternativeName>
        <fullName evidence="1">tRNA-i(6)A37 methylthiotransferase</fullName>
    </alternativeName>
</protein>
<accession>B2S3Z3</accession>